<dbReference type="EC" id="2.1.1.181" evidence="1"/>
<dbReference type="EMBL" id="FM200053">
    <property type="protein sequence ID" value="CAR59991.1"/>
    <property type="molecule type" value="Genomic_DNA"/>
</dbReference>
<dbReference type="RefSeq" id="WP_001275964.1">
    <property type="nucleotide sequence ID" value="NC_011147.1"/>
</dbReference>
<dbReference type="SMR" id="B5BC01"/>
<dbReference type="KEGG" id="sek:SSPA1796"/>
<dbReference type="HOGENOM" id="CLU_027534_3_0_6"/>
<dbReference type="Proteomes" id="UP000001869">
    <property type="component" value="Chromosome"/>
</dbReference>
<dbReference type="GO" id="GO:0005737">
    <property type="term" value="C:cytoplasm"/>
    <property type="evidence" value="ECO:0007669"/>
    <property type="project" value="UniProtKB-SubCell"/>
</dbReference>
<dbReference type="GO" id="GO:0052907">
    <property type="term" value="F:23S rRNA (adenine(1618)-N(6))-methyltransferase activity"/>
    <property type="evidence" value="ECO:0007669"/>
    <property type="project" value="UniProtKB-EC"/>
</dbReference>
<dbReference type="GO" id="GO:0070475">
    <property type="term" value="P:rRNA base methylation"/>
    <property type="evidence" value="ECO:0007669"/>
    <property type="project" value="TreeGrafter"/>
</dbReference>
<dbReference type="FunFam" id="3.40.50.150:FF:000045">
    <property type="entry name" value="Ribosomal RNA large subunit methyltransferase F"/>
    <property type="match status" value="1"/>
</dbReference>
<dbReference type="Gene3D" id="3.40.50.150">
    <property type="entry name" value="Vaccinia Virus protein VP39"/>
    <property type="match status" value="1"/>
</dbReference>
<dbReference type="HAMAP" id="MF_01848">
    <property type="entry name" value="23SrRNA_methyltr_F"/>
    <property type="match status" value="1"/>
</dbReference>
<dbReference type="InterPro" id="IPR010286">
    <property type="entry name" value="METTL16/RlmF"/>
</dbReference>
<dbReference type="InterPro" id="IPR016909">
    <property type="entry name" value="rRNA_lsu_MeTfrase_F"/>
</dbReference>
<dbReference type="InterPro" id="IPR029063">
    <property type="entry name" value="SAM-dependent_MTases_sf"/>
</dbReference>
<dbReference type="NCBIfam" id="NF008725">
    <property type="entry name" value="PRK11727.1"/>
    <property type="match status" value="1"/>
</dbReference>
<dbReference type="PANTHER" id="PTHR13393:SF0">
    <property type="entry name" value="RNA N6-ADENOSINE-METHYLTRANSFERASE METTL16"/>
    <property type="match status" value="1"/>
</dbReference>
<dbReference type="PANTHER" id="PTHR13393">
    <property type="entry name" value="SAM-DEPENDENT METHYLTRANSFERASE"/>
    <property type="match status" value="1"/>
</dbReference>
<dbReference type="Pfam" id="PF05971">
    <property type="entry name" value="Methyltransf_10"/>
    <property type="match status" value="1"/>
</dbReference>
<dbReference type="PIRSF" id="PIRSF029038">
    <property type="entry name" value="Mtase_YbiN_prd"/>
    <property type="match status" value="1"/>
</dbReference>
<dbReference type="SUPFAM" id="SSF53335">
    <property type="entry name" value="S-adenosyl-L-methionine-dependent methyltransferases"/>
    <property type="match status" value="1"/>
</dbReference>
<gene>
    <name evidence="1" type="primary">rlmF</name>
    <name type="ordered locus">SSPA1796</name>
</gene>
<feature type="chain" id="PRO_1000188534" description="Ribosomal RNA large subunit methyltransferase F">
    <location>
        <begin position="1"/>
        <end position="308"/>
    </location>
</feature>
<keyword id="KW-0963">Cytoplasm</keyword>
<keyword id="KW-0489">Methyltransferase</keyword>
<keyword id="KW-0698">rRNA processing</keyword>
<keyword id="KW-0949">S-adenosyl-L-methionine</keyword>
<keyword id="KW-0808">Transferase</keyword>
<reference key="1">
    <citation type="journal article" date="2009" name="BMC Genomics">
        <title>Pseudogene accumulation in the evolutionary histories of Salmonella enterica serovars Paratyphi A and Typhi.</title>
        <authorList>
            <person name="Holt K.E."/>
            <person name="Thomson N.R."/>
            <person name="Wain J."/>
            <person name="Langridge G.C."/>
            <person name="Hasan R."/>
            <person name="Bhutta Z.A."/>
            <person name="Quail M.A."/>
            <person name="Norbertczak H."/>
            <person name="Walker D."/>
            <person name="Simmonds M."/>
            <person name="White B."/>
            <person name="Bason N."/>
            <person name="Mungall K."/>
            <person name="Dougan G."/>
            <person name="Parkhill J."/>
        </authorList>
    </citation>
    <scope>NUCLEOTIDE SEQUENCE [LARGE SCALE GENOMIC DNA]</scope>
    <source>
        <strain>AKU_12601</strain>
    </source>
</reference>
<evidence type="ECO:0000255" key="1">
    <source>
        <dbReference type="HAMAP-Rule" id="MF_01848"/>
    </source>
</evidence>
<proteinExistence type="inferred from homology"/>
<organism>
    <name type="scientific">Salmonella paratyphi A (strain AKU_12601)</name>
    <dbReference type="NCBI Taxonomy" id="554290"/>
    <lineage>
        <taxon>Bacteria</taxon>
        <taxon>Pseudomonadati</taxon>
        <taxon>Pseudomonadota</taxon>
        <taxon>Gammaproteobacteria</taxon>
        <taxon>Enterobacterales</taxon>
        <taxon>Enterobacteriaceae</taxon>
        <taxon>Salmonella</taxon>
    </lineage>
</organism>
<accession>B5BC01</accession>
<sequence>MSAQKPGLHPRNRHQHRYDLAALCQTTPELTSFLIRTPAGEQSVDFANPQAVKALNKALLAHFYAVTHWDIPPGFLCPPVPGRADYIHHLADLLGETTGSIPAQATILDVGVGANCIYPLIGVHEYGWRFTGSEVSDAAMSSAQAIIQANTGLSRAIRLRRQKDPAAIFTGIIHKNEFYDATLCNPPFHDSAAAARAGSERKRRNLGQNKDDALNFGGQQQELWCEGGEVAFIKKMIAESQTFRRQVLWFTTLVSRGENLPPLYRALTEAGAVKVVKKEMAQGQKQSRFIAWTFMDDDQRRRFITRKR</sequence>
<comment type="function">
    <text evidence="1">Specifically methylates the adenine in position 1618 of 23S rRNA.</text>
</comment>
<comment type="catalytic activity">
    <reaction evidence="1">
        <text>adenosine(1618) in 23S rRNA + S-adenosyl-L-methionine = N(6)-methyladenosine(1618) in 23S rRNA + S-adenosyl-L-homocysteine + H(+)</text>
        <dbReference type="Rhea" id="RHEA:16497"/>
        <dbReference type="Rhea" id="RHEA-COMP:10229"/>
        <dbReference type="Rhea" id="RHEA-COMP:10231"/>
        <dbReference type="ChEBI" id="CHEBI:15378"/>
        <dbReference type="ChEBI" id="CHEBI:57856"/>
        <dbReference type="ChEBI" id="CHEBI:59789"/>
        <dbReference type="ChEBI" id="CHEBI:74411"/>
        <dbReference type="ChEBI" id="CHEBI:74449"/>
        <dbReference type="EC" id="2.1.1.181"/>
    </reaction>
</comment>
<comment type="subcellular location">
    <subcellularLocation>
        <location evidence="1">Cytoplasm</location>
    </subcellularLocation>
</comment>
<comment type="similarity">
    <text evidence="1">Belongs to the methyltransferase superfamily. METTL16/RlmF family.</text>
</comment>
<name>RLMF_SALPK</name>
<protein>
    <recommendedName>
        <fullName evidence="1">Ribosomal RNA large subunit methyltransferase F</fullName>
        <ecNumber evidence="1">2.1.1.181</ecNumber>
    </recommendedName>
    <alternativeName>
        <fullName evidence="1">23S rRNA mA1618 methyltransferase</fullName>
    </alternativeName>
    <alternativeName>
        <fullName evidence="1">rRNA adenine N-6-methyltransferase</fullName>
    </alternativeName>
</protein>